<sequence length="138" mass="15129">MLDRLDAALRFQQEALNLRAQRQEILAANIANADTPGYQARDIDFASELKKVMVRGREETGGVALTLTSSHHIPAQAVSSPAVDLLYRVPDQPSLDGNTVDMDRERTQFADNSLKYQMGLTVLGSQLKGMMNVLQGGN</sequence>
<dbReference type="EMBL" id="X52093">
    <property type="protein sequence ID" value="CAA36309.1"/>
    <property type="molecule type" value="Genomic_DNA"/>
</dbReference>
<dbReference type="EMBL" id="D13703">
    <property type="protein sequence ID" value="BAA02861.1"/>
    <property type="molecule type" value="Genomic_DNA"/>
</dbReference>
<dbReference type="EMBL" id="AE006468">
    <property type="protein sequence ID" value="AAL20104.1"/>
    <property type="molecule type" value="Genomic_DNA"/>
</dbReference>
<dbReference type="EMBL" id="D25292">
    <property type="protein sequence ID" value="BAA21014.1"/>
    <property type="molecule type" value="Genomic_DNA"/>
</dbReference>
<dbReference type="PIR" id="S08171">
    <property type="entry name" value="XMEBFB"/>
</dbReference>
<dbReference type="RefSeq" id="NP_460145.1">
    <property type="nucleotide sequence ID" value="NC_003197.2"/>
</dbReference>
<dbReference type="RefSeq" id="WP_000887043.1">
    <property type="nucleotide sequence ID" value="NC_003197.2"/>
</dbReference>
<dbReference type="PDB" id="7BIN">
    <property type="method" value="EM"/>
    <property type="resolution" value="3.20 A"/>
    <property type="chains" value="Q/R/S/T/U=1-138"/>
</dbReference>
<dbReference type="PDB" id="7CG0">
    <property type="method" value="EM"/>
    <property type="resolution" value="3.20 A"/>
    <property type="chains" value="k/l/m/n/o=1-138"/>
</dbReference>
<dbReference type="PDB" id="7CGO">
    <property type="method" value="EM"/>
    <property type="resolution" value="3.90 A"/>
    <property type="chains" value="k/l/m/n/o=1-138"/>
</dbReference>
<dbReference type="PDB" id="7E80">
    <property type="method" value="EM"/>
    <property type="resolution" value="3.67 A"/>
    <property type="chains" value="k/l/m/n/o=1-138"/>
</dbReference>
<dbReference type="PDB" id="7E82">
    <property type="method" value="EM"/>
    <property type="resolution" value="3.30 A"/>
    <property type="chains" value="k/l/m/n/o=1-138"/>
</dbReference>
<dbReference type="PDB" id="8WK3">
    <property type="method" value="EM"/>
    <property type="resolution" value="3.30 A"/>
    <property type="chains" value="Q/R/S/T/U=1-138"/>
</dbReference>
<dbReference type="PDB" id="8WK4">
    <property type="method" value="EM"/>
    <property type="resolution" value="3.70 A"/>
    <property type="chains" value="o/p/q/r/s=1-138"/>
</dbReference>
<dbReference type="PDB" id="8WKK">
    <property type="method" value="EM"/>
    <property type="resolution" value="3.30 A"/>
    <property type="chains" value="Q/R/S/T/U=1-138"/>
</dbReference>
<dbReference type="PDB" id="8WKQ">
    <property type="method" value="EM"/>
    <property type="resolution" value="3.80 A"/>
    <property type="chains" value="Q/R/S/T/U=1-138"/>
</dbReference>
<dbReference type="PDB" id="8WL2">
    <property type="method" value="EM"/>
    <property type="resolution" value="3.40 A"/>
    <property type="chains" value="A0/A6/A7/A8/A9=1-138"/>
</dbReference>
<dbReference type="PDB" id="8WLH">
    <property type="method" value="EM"/>
    <property type="resolution" value="3.70 A"/>
    <property type="chains" value="Q/R/S/T/U=1-138"/>
</dbReference>
<dbReference type="PDB" id="8WLN">
    <property type="method" value="EM"/>
    <property type="resolution" value="4.30 A"/>
    <property type="chains" value="Q/R/S/T/U=1-138"/>
</dbReference>
<dbReference type="PDB" id="8WLQ">
    <property type="method" value="EM"/>
    <property type="resolution" value="3.80 A"/>
    <property type="chains" value="Q/R/S/T/U=1-138"/>
</dbReference>
<dbReference type="PDB" id="8WLT">
    <property type="method" value="EM"/>
    <property type="resolution" value="4.10 A"/>
    <property type="chains" value="A0/A6/A7/A8/A9=1-138"/>
</dbReference>
<dbReference type="PDB" id="8WO5">
    <property type="method" value="EM"/>
    <property type="resolution" value="7.40 A"/>
    <property type="chains" value="A0/A6/A7/A8/A9=1-138"/>
</dbReference>
<dbReference type="PDB" id="8WOE">
    <property type="method" value="EM"/>
    <property type="resolution" value="4.30 A"/>
    <property type="chains" value="A0/A6/A7/A8/A9=1-138"/>
</dbReference>
<dbReference type="PDBsum" id="7BIN"/>
<dbReference type="PDBsum" id="7CG0"/>
<dbReference type="PDBsum" id="7CGO"/>
<dbReference type="PDBsum" id="7E80"/>
<dbReference type="PDBsum" id="7E82"/>
<dbReference type="PDBsum" id="8WK3"/>
<dbReference type="PDBsum" id="8WK4"/>
<dbReference type="PDBsum" id="8WKK"/>
<dbReference type="PDBsum" id="8WKQ"/>
<dbReference type="PDBsum" id="8WL2"/>
<dbReference type="PDBsum" id="8WLH"/>
<dbReference type="PDBsum" id="8WLN"/>
<dbReference type="PDBsum" id="8WLQ"/>
<dbReference type="PDBsum" id="8WLT"/>
<dbReference type="PDBsum" id="8WO5"/>
<dbReference type="PDBsum" id="8WOE"/>
<dbReference type="EMDB" id="EMD-12192"/>
<dbReference type="EMDB" id="EMD-30348"/>
<dbReference type="EMDB" id="EMD-30359"/>
<dbReference type="EMDB" id="EMD-31006"/>
<dbReference type="EMDB" id="EMD-31008"/>
<dbReference type="EMDB" id="EMD-37594"/>
<dbReference type="EMDB" id="EMD-37595"/>
<dbReference type="EMDB" id="EMD-37601"/>
<dbReference type="EMDB" id="EMD-37605"/>
<dbReference type="EMDB" id="EMD-37611"/>
<dbReference type="EMDB" id="EMD-37619"/>
<dbReference type="EMDB" id="EMD-37625"/>
<dbReference type="EMDB" id="EMD-37628"/>
<dbReference type="EMDB" id="EMD-37630"/>
<dbReference type="EMDB" id="EMD-37679"/>
<dbReference type="EMDB" id="EMD-37684"/>
<dbReference type="SMR" id="P16437"/>
<dbReference type="STRING" id="99287.STM1174"/>
<dbReference type="PaxDb" id="99287-STM1174"/>
<dbReference type="GeneID" id="1252692"/>
<dbReference type="KEGG" id="stm:STM1174"/>
<dbReference type="PATRIC" id="fig|99287.12.peg.1242"/>
<dbReference type="HOGENOM" id="CLU_125463_1_0_6"/>
<dbReference type="OMA" id="DGHMARN"/>
<dbReference type="PhylomeDB" id="P16437"/>
<dbReference type="BioCyc" id="SENT99287:STM1174-MONOMER"/>
<dbReference type="Proteomes" id="UP000001014">
    <property type="component" value="Chromosome"/>
</dbReference>
<dbReference type="GO" id="GO:0030694">
    <property type="term" value="C:bacterial-type flagellum basal body, rod"/>
    <property type="evidence" value="ECO:0007669"/>
    <property type="project" value="InterPro"/>
</dbReference>
<dbReference type="GO" id="GO:0071973">
    <property type="term" value="P:bacterial-type flagellum-dependent cell motility"/>
    <property type="evidence" value="ECO:0007669"/>
    <property type="project" value="InterPro"/>
</dbReference>
<dbReference type="InterPro" id="IPR001444">
    <property type="entry name" value="Flag_bb_rod_N"/>
</dbReference>
<dbReference type="InterPro" id="IPR019776">
    <property type="entry name" value="Flagellar_basal_body_rod_CS"/>
</dbReference>
<dbReference type="InterPro" id="IPR006300">
    <property type="entry name" value="FlgB"/>
</dbReference>
<dbReference type="NCBIfam" id="TIGR01396">
    <property type="entry name" value="FlgB"/>
    <property type="match status" value="1"/>
</dbReference>
<dbReference type="PANTHER" id="PTHR30435:SF12">
    <property type="entry name" value="FLAGELLAR BASAL BODY ROD PROTEIN FLGB"/>
    <property type="match status" value="1"/>
</dbReference>
<dbReference type="PANTHER" id="PTHR30435">
    <property type="entry name" value="FLAGELLAR PROTEIN"/>
    <property type="match status" value="1"/>
</dbReference>
<dbReference type="Pfam" id="PF00460">
    <property type="entry name" value="Flg_bb_rod"/>
    <property type="match status" value="1"/>
</dbReference>
<dbReference type="PIRSF" id="PIRSF002889">
    <property type="entry name" value="Rod_FlgB"/>
    <property type="match status" value="1"/>
</dbReference>
<dbReference type="PROSITE" id="PS00588">
    <property type="entry name" value="FLAGELLA_BB_ROD"/>
    <property type="match status" value="1"/>
</dbReference>
<evidence type="ECO:0000269" key="1">
    <source>
    </source>
</evidence>
<evidence type="ECO:0000269" key="2">
    <source>
    </source>
</evidence>
<evidence type="ECO:0000269" key="3">
    <source>
    </source>
</evidence>
<evidence type="ECO:0000269" key="4">
    <source>
    </source>
</evidence>
<evidence type="ECO:0000269" key="5">
    <source>
    </source>
</evidence>
<evidence type="ECO:0000269" key="6">
    <source>
    </source>
</evidence>
<evidence type="ECO:0000305" key="7"/>
<evidence type="ECO:0007829" key="8">
    <source>
        <dbReference type="PDB" id="7BIN"/>
    </source>
</evidence>
<evidence type="ECO:0007829" key="9">
    <source>
        <dbReference type="PDB" id="7CG0"/>
    </source>
</evidence>
<accession>P16437</accession>
<organism>
    <name type="scientific">Salmonella typhimurium (strain LT2 / SGSC1412 / ATCC 700720)</name>
    <dbReference type="NCBI Taxonomy" id="99287"/>
    <lineage>
        <taxon>Bacteria</taxon>
        <taxon>Pseudomonadati</taxon>
        <taxon>Pseudomonadota</taxon>
        <taxon>Gammaproteobacteria</taxon>
        <taxon>Enterobacterales</taxon>
        <taxon>Enterobacteriaceae</taxon>
        <taxon>Salmonella</taxon>
    </lineage>
</organism>
<name>FLGB_SALTY</name>
<comment type="function">
    <text evidence="1 3 4 5 6">Structural component of flagellum, the bacterial motility apparatus. Part of the rod structure of flagellar basal body.</text>
</comment>
<comment type="subunit">
    <text evidence="1 2 3 4 5 6">The basal body constitutes a major portion of the flagellar organelle and consists of a number of rings mounted on a central rod. In Gram-negative bacteria, at least four rings, L, P, S and M are present, whereas Gram-positive bacteria lack the L and P rings. The rod consists of about 26 subunits of FlgG in the distal portion, and FlgB, FlgC and FlgF build up the proximal portion of the rod with about 6 subunits each. Rod assembly occurs by export via the flagellum-specific pathway of its constituent proteins and by their incorporation into the rod structure in the probable order of FlgB, FlgC, FlgF and FlgG. Another protein, FliE, also assembles onto the stable rod structure. Interacts with FliE and peptidoglycan hydrolase FlgJ (via N-terminus), which seems to function as a scaffold or cap for rod assembly.</text>
</comment>
<comment type="subcellular location">
    <subcellularLocation>
        <location evidence="1 2 3 4 5 6">Bacterial flagellum basal body</location>
    </subcellularLocation>
</comment>
<comment type="disruption phenotype">
    <text evidence="4">Defects in flagellar assembly process.</text>
</comment>
<comment type="similarity">
    <text evidence="7">Belongs to the flagella basal body rod proteins family.</text>
</comment>
<reference key="1">
    <citation type="journal article" date="1990" name="J. Mol. Biol.">
        <title>FlgB, FlgC, FlgF and FlgG. A family of structurally related proteins in the flagellar basal body of Salmonella typhimurium.</title>
        <authorList>
            <person name="Homma M."/>
            <person name="Kutsukake K."/>
            <person name="Hasebe M."/>
            <person name="Iino T."/>
            <person name="Macnab R.M."/>
        </authorList>
    </citation>
    <scope>NUCLEOTIDE SEQUENCE [GENOMIC DNA]</scope>
</reference>
<reference key="2">
    <citation type="journal article" date="1990" name="J. Bacteriol.">
        <title>Transcriptional analysis of the flagellar regulon of Salmonella typhimurium.</title>
        <authorList>
            <person name="Kutsukake K."/>
            <person name="Ohya Y."/>
            <person name="Iino T."/>
        </authorList>
    </citation>
    <scope>NUCLEOTIDE SEQUENCE [GENOMIC DNA]</scope>
    <source>
        <strain>LT2</strain>
    </source>
</reference>
<reference key="3">
    <citation type="journal article" date="2001" name="Nature">
        <title>Complete genome sequence of Salmonella enterica serovar Typhimurium LT2.</title>
        <authorList>
            <person name="McClelland M."/>
            <person name="Sanderson K.E."/>
            <person name="Spieth J."/>
            <person name="Clifton S.W."/>
            <person name="Latreille P."/>
            <person name="Courtney L."/>
            <person name="Porwollik S."/>
            <person name="Ali J."/>
            <person name="Dante M."/>
            <person name="Du F."/>
            <person name="Hou S."/>
            <person name="Layman D."/>
            <person name="Leonard S."/>
            <person name="Nguyen C."/>
            <person name="Scott K."/>
            <person name="Holmes A."/>
            <person name="Grewal N."/>
            <person name="Mulvaney E."/>
            <person name="Ryan E."/>
            <person name="Sun H."/>
            <person name="Florea L."/>
            <person name="Miller W."/>
            <person name="Stoneking T."/>
            <person name="Nhan M."/>
            <person name="Waterston R."/>
            <person name="Wilson R.K."/>
        </authorList>
    </citation>
    <scope>NUCLEOTIDE SEQUENCE [LARGE SCALE GENOMIC DNA]</scope>
    <source>
        <strain>LT2 / SGSC1412 / ATCC 700720</strain>
    </source>
</reference>
<reference key="4">
    <citation type="journal article" date="1994" name="Gene">
        <title>Sequence analysis of the flgA gene and its adjacent region in Salmonella typhimurium, and identification of another flagellar gene, flgN.</title>
        <authorList>
            <person name="Kutsukake K."/>
            <person name="Okada T."/>
            <person name="Yokoseki T."/>
            <person name="Iino T."/>
        </authorList>
    </citation>
    <scope>NUCLEOTIDE SEQUENCE [GENOMIC DNA] OF 1-66</scope>
    <source>
        <strain>LT2</strain>
    </source>
</reference>
<reference key="5">
    <citation type="journal article" date="1990" name="J. Mol. Biol.">
        <title>Stoichiometric analysis of the flagellar hook-(basal-body) complex of Salmonella typhimurium.</title>
        <authorList>
            <person name="Jones C.J."/>
            <person name="Macnab R.M."/>
            <person name="Okino H."/>
            <person name="Aizawa S."/>
        </authorList>
    </citation>
    <scope>PARTIAL PROTEIN SEQUENCE</scope>
    <scope>FUNCTION</scope>
    <scope>SUBUNIT</scope>
    <scope>SUBCELLULAR LOCATION</scope>
    <source>
        <strain>SJW1103</strain>
    </source>
</reference>
<reference key="6">
    <citation type="journal article" date="1990" name="J. Mol. Biol.">
        <authorList>
            <person name="Jones C.J."/>
            <person name="Macnab R.M."/>
            <person name="Okino H."/>
            <person name="Aizawa S."/>
        </authorList>
    </citation>
    <scope>ERRATUM OF PUBMED:2181149</scope>
    <scope>SEQUENCE REVISION OF N-TERMINUS</scope>
</reference>
<reference key="7">
    <citation type="journal article" date="1990" name="J. Bacteriol.">
        <title>Flagellar assembly in Salmonella typhimurium: analysis with temperature-sensitive mutants.</title>
        <authorList>
            <person name="Jones C.J."/>
            <person name="Macnab R.M."/>
        </authorList>
    </citation>
    <scope>FUNCTION</scope>
    <scope>SUBUNIT</scope>
    <scope>SUBCELLULAR LOCATION</scope>
    <source>
        <strain>ATCC 29595 / ST1</strain>
    </source>
</reference>
<reference key="8">
    <citation type="journal article" date="1992" name="J. Mol. Biol.">
        <title>Morphological pathway of flagellar assembly in Salmonella typhimurium.</title>
        <authorList>
            <person name="Kubori T."/>
            <person name="Shimamoto N."/>
            <person name="Yamaguchi S."/>
            <person name="Namba K."/>
            <person name="Aizawa S."/>
        </authorList>
    </citation>
    <scope>FUNCTION</scope>
    <scope>SUBUNIT</scope>
    <scope>SUBCELLULAR LOCATION</scope>
    <scope>DISRUPTION PHENOTYPE</scope>
    <source>
        <strain>SJW1103</strain>
    </source>
</reference>
<reference key="9">
    <citation type="journal article" date="1992" name="Proc. Natl. Acad. Sci. U.S.A.">
        <title>Mass determination and estimation of subunit stoichiometry of the bacterial hook-basal body flagellar complex of Salmonella typhimurium by scanning transmission electron microscopy.</title>
        <authorList>
            <person name="Sosinsky G.E."/>
            <person name="Francis N.R."/>
            <person name="DeRosier D.J."/>
            <person name="Wall J.S."/>
            <person name="Simon M.N."/>
            <person name="Hainfeld J."/>
        </authorList>
    </citation>
    <scope>FUNCTION</scope>
    <scope>SUBUNIT</scope>
    <scope>SUBCELLULAR LOCATION</scope>
    <source>
        <strain>ATCC 29595 / ST1</strain>
    </source>
</reference>
<reference key="10">
    <citation type="journal article" date="2000" name="J. Bacteriol.">
        <title>Interaction between FliE and FlgB, a proximal rod component of the flagellar basal body of Salmonella.</title>
        <authorList>
            <person name="Minamino T."/>
            <person name="Yamaguchi S."/>
            <person name="Macnab R.M."/>
        </authorList>
    </citation>
    <scope>FUNCTION</scope>
    <scope>SUBUNIT</scope>
    <scope>INTERACTION WITH FLIE</scope>
    <scope>SUBCELLULAR LOCATION</scope>
    <source>
        <strain>SJW1103</strain>
    </source>
</reference>
<reference key="11">
    <citation type="journal article" date="2001" name="J. Mol. Biol.">
        <title>The role in flagellar rod assembly of the N-terminal domain of Salmonella FlgJ, a flagellum-specific muramidase.</title>
        <authorList>
            <person name="Hirano T."/>
            <person name="Minamino T."/>
            <person name="Macnab R.M."/>
        </authorList>
    </citation>
    <scope>INTERACTION WITH FLGJ</scope>
    <scope>SUBCELLULAR LOCATION</scope>
</reference>
<protein>
    <recommendedName>
        <fullName>Flagellar basal body rod protein FlgB</fullName>
    </recommendedName>
    <alternativeName>
        <fullName>Putative proximal rod protein</fullName>
    </alternativeName>
</protein>
<gene>
    <name type="primary">flgB</name>
    <name type="synonym">fla FII</name>
    <name type="synonym">flbA</name>
    <name type="ordered locus">STM1174</name>
</gene>
<proteinExistence type="evidence at protein level"/>
<keyword id="KW-0002">3D-structure</keyword>
<keyword id="KW-0975">Bacterial flagellum</keyword>
<keyword id="KW-0903">Direct protein sequencing</keyword>
<keyword id="KW-1185">Reference proteome</keyword>
<feature type="chain" id="PRO_0000180792" description="Flagellar basal body rod protein FlgB">
    <location>
        <begin position="1"/>
        <end position="138"/>
    </location>
</feature>
<feature type="turn" evidence="8">
    <location>
        <begin position="6"/>
        <end position="8"/>
    </location>
</feature>
<feature type="helix" evidence="8">
    <location>
        <begin position="10"/>
        <end position="31"/>
    </location>
</feature>
<feature type="turn" evidence="8">
    <location>
        <begin position="32"/>
        <end position="34"/>
    </location>
</feature>
<feature type="helix" evidence="8">
    <location>
        <begin position="45"/>
        <end position="55"/>
    </location>
</feature>
<feature type="strand" evidence="9">
    <location>
        <begin position="86"/>
        <end position="88"/>
    </location>
</feature>
<feature type="strand" evidence="8">
    <location>
        <begin position="95"/>
        <end position="97"/>
    </location>
</feature>
<feature type="helix" evidence="8">
    <location>
        <begin position="102"/>
        <end position="133"/>
    </location>
</feature>